<feature type="chain" id="PRO_0000225905" description="Small ribosomal subunit protein uS8c">
    <location>
        <begin position="1"/>
        <end position="134"/>
    </location>
</feature>
<gene>
    <name type="primary">rps8</name>
    <name type="ordered locus">CsCp077</name>
</gene>
<comment type="function">
    <text evidence="1">One of the primary rRNA binding proteins, it binds directly to 16S rRNA central domain where it helps coordinate assembly of the platform of the 30S subunit.</text>
</comment>
<comment type="subunit">
    <text evidence="1">Part of the 30S ribosomal subunit.</text>
</comment>
<comment type="subcellular location">
    <subcellularLocation>
        <location>Plastid</location>
        <location>Chloroplast</location>
    </subcellularLocation>
</comment>
<comment type="similarity">
    <text evidence="2">Belongs to the universal ribosomal protein uS8 family.</text>
</comment>
<protein>
    <recommendedName>
        <fullName evidence="2">Small ribosomal subunit protein uS8c</fullName>
    </recommendedName>
    <alternativeName>
        <fullName>30S ribosomal protein S8, chloroplastic</fullName>
    </alternativeName>
</protein>
<dbReference type="EMBL" id="DQ119058">
    <property type="protein sequence ID" value="AAZ94685.1"/>
    <property type="molecule type" value="Genomic_DNA"/>
</dbReference>
<dbReference type="EMBL" id="AJ970307">
    <property type="protein sequence ID" value="CAJ00794.1"/>
    <property type="molecule type" value="Genomic_DNA"/>
</dbReference>
<dbReference type="EMBL" id="DQ865975">
    <property type="protein sequence ID" value="ABI97452.1"/>
    <property type="molecule type" value="Genomic_DNA"/>
</dbReference>
<dbReference type="EMBL" id="DQ865976">
    <property type="protein sequence ID" value="ABI98781.1"/>
    <property type="molecule type" value="Genomic_DNA"/>
</dbReference>
<dbReference type="RefSeq" id="YP_247635.1">
    <property type="nucleotide sequence ID" value="NC_007144.1"/>
</dbReference>
<dbReference type="SMR" id="Q4VZK0"/>
<dbReference type="GeneID" id="3429318"/>
<dbReference type="KEGG" id="csv:3429318"/>
<dbReference type="eggNOG" id="KOG1754">
    <property type="taxonomic scope" value="Eukaryota"/>
</dbReference>
<dbReference type="OrthoDB" id="409928at2759"/>
<dbReference type="GO" id="GO:0009507">
    <property type="term" value="C:chloroplast"/>
    <property type="evidence" value="ECO:0007669"/>
    <property type="project" value="UniProtKB-SubCell"/>
</dbReference>
<dbReference type="GO" id="GO:1990904">
    <property type="term" value="C:ribonucleoprotein complex"/>
    <property type="evidence" value="ECO:0007669"/>
    <property type="project" value="UniProtKB-KW"/>
</dbReference>
<dbReference type="GO" id="GO:0005840">
    <property type="term" value="C:ribosome"/>
    <property type="evidence" value="ECO:0007669"/>
    <property type="project" value="UniProtKB-KW"/>
</dbReference>
<dbReference type="GO" id="GO:0019843">
    <property type="term" value="F:rRNA binding"/>
    <property type="evidence" value="ECO:0007669"/>
    <property type="project" value="UniProtKB-UniRule"/>
</dbReference>
<dbReference type="GO" id="GO:0003735">
    <property type="term" value="F:structural constituent of ribosome"/>
    <property type="evidence" value="ECO:0007669"/>
    <property type="project" value="InterPro"/>
</dbReference>
<dbReference type="GO" id="GO:0006412">
    <property type="term" value="P:translation"/>
    <property type="evidence" value="ECO:0007669"/>
    <property type="project" value="UniProtKB-UniRule"/>
</dbReference>
<dbReference type="FunFam" id="3.30.1490.10:FF:000001">
    <property type="entry name" value="30S ribosomal protein S8"/>
    <property type="match status" value="1"/>
</dbReference>
<dbReference type="FunFam" id="3.30.1370.30:FF:000004">
    <property type="entry name" value="30S ribosomal protein S8, chloroplastic"/>
    <property type="match status" value="1"/>
</dbReference>
<dbReference type="Gene3D" id="3.30.1370.30">
    <property type="match status" value="1"/>
</dbReference>
<dbReference type="Gene3D" id="3.30.1490.10">
    <property type="match status" value="1"/>
</dbReference>
<dbReference type="HAMAP" id="MF_01302_B">
    <property type="entry name" value="Ribosomal_uS8_B"/>
    <property type="match status" value="1"/>
</dbReference>
<dbReference type="InterPro" id="IPR000630">
    <property type="entry name" value="Ribosomal_uS8"/>
</dbReference>
<dbReference type="InterPro" id="IPR047863">
    <property type="entry name" value="Ribosomal_uS8_CS"/>
</dbReference>
<dbReference type="InterPro" id="IPR035987">
    <property type="entry name" value="Ribosomal_uS8_sf"/>
</dbReference>
<dbReference type="NCBIfam" id="NF001109">
    <property type="entry name" value="PRK00136.1"/>
    <property type="match status" value="1"/>
</dbReference>
<dbReference type="PANTHER" id="PTHR11758">
    <property type="entry name" value="40S RIBOSOMAL PROTEIN S15A"/>
    <property type="match status" value="1"/>
</dbReference>
<dbReference type="Pfam" id="PF00410">
    <property type="entry name" value="Ribosomal_S8"/>
    <property type="match status" value="1"/>
</dbReference>
<dbReference type="SUPFAM" id="SSF56047">
    <property type="entry name" value="Ribosomal protein S8"/>
    <property type="match status" value="1"/>
</dbReference>
<dbReference type="PROSITE" id="PS00053">
    <property type="entry name" value="RIBOSOMAL_S8"/>
    <property type="match status" value="1"/>
</dbReference>
<accession>Q4VZK0</accession>
<accession>A5J1X0</accession>
<reference key="1">
    <citation type="journal article" date="2006" name="Plant Cell Rep.">
        <title>Complete sequence and organization of the cucumber (Cucumis sativus L. cv. Baekmibaekdadagi) chloroplast genome.</title>
        <authorList>
            <person name="Kim J.-S."/>
            <person name="Jung J.D."/>
            <person name="Lee J.-A."/>
            <person name="Park H.-W."/>
            <person name="Oh K.-H."/>
            <person name="Jeong W.J."/>
            <person name="Choi D.-W."/>
            <person name="Liu J.R."/>
            <person name="Cho K.Y."/>
        </authorList>
    </citation>
    <scope>NUCLEOTIDE SEQUENCE [LARGE SCALE GENOMIC DNA]</scope>
    <source>
        <strain>cv. Baekmibaekdadagi</strain>
    </source>
</reference>
<reference key="2">
    <citation type="journal article" date="2007" name="Cell. Mol. Biol. Lett.">
        <title>The complete structure of the cucumber (Cucumis sativus L.) chloroplast genome: its composition and comparative analysis.</title>
        <authorList>
            <person name="Plader W.W."/>
            <person name="Yukawa Y."/>
            <person name="Sugiura M."/>
            <person name="Malepszy S."/>
        </authorList>
    </citation>
    <scope>NUCLEOTIDE SEQUENCE [LARGE SCALE GENOMIC DNA]</scope>
    <source>
        <strain>cv. Borszczagowski</strain>
    </source>
</reference>
<reference key="3">
    <citation type="journal article" date="2007" name="Genome">
        <title>Sequencing cucumber (Cucumis sativus L.) chloroplast genomes identifies differences between chilling-tolerant and -susceptible cucumber lines.</title>
        <authorList>
            <person name="Chung S.-M."/>
            <person name="Gordon V.S."/>
            <person name="Staub J.E."/>
        </authorList>
    </citation>
    <scope>NUCLEOTIDE SEQUENCE [LARGE SCALE GENOMIC DNA]</scope>
    <source>
        <strain>cv. Chipper</strain>
        <strain>cv. Gy14</strain>
    </source>
</reference>
<name>RR8_CUCSA</name>
<organism>
    <name type="scientific">Cucumis sativus</name>
    <name type="common">Cucumber</name>
    <dbReference type="NCBI Taxonomy" id="3659"/>
    <lineage>
        <taxon>Eukaryota</taxon>
        <taxon>Viridiplantae</taxon>
        <taxon>Streptophyta</taxon>
        <taxon>Embryophyta</taxon>
        <taxon>Tracheophyta</taxon>
        <taxon>Spermatophyta</taxon>
        <taxon>Magnoliopsida</taxon>
        <taxon>eudicotyledons</taxon>
        <taxon>Gunneridae</taxon>
        <taxon>Pentapetalae</taxon>
        <taxon>rosids</taxon>
        <taxon>fabids</taxon>
        <taxon>Cucurbitales</taxon>
        <taxon>Cucurbitaceae</taxon>
        <taxon>Benincaseae</taxon>
        <taxon>Cucumis</taxon>
    </lineage>
</organism>
<evidence type="ECO:0000250" key="1"/>
<evidence type="ECO:0000305" key="2"/>
<geneLocation type="chloroplast"/>
<sequence length="134" mass="15504">MGKDTIANIITSIRNADMNRKGMVRIPATNITENIVKILLREGFIENVRKHRESNKDFWVLTLRHRRNRKGPYKTILNLKRISRPGLRIYSNYQKIPRILGGMGIVILSTSRGIMTDREARLQGIGGEILCYIW</sequence>
<keyword id="KW-0150">Chloroplast</keyword>
<keyword id="KW-0934">Plastid</keyword>
<keyword id="KW-0687">Ribonucleoprotein</keyword>
<keyword id="KW-0689">Ribosomal protein</keyword>
<keyword id="KW-0694">RNA-binding</keyword>
<keyword id="KW-0699">rRNA-binding</keyword>
<proteinExistence type="inferred from homology"/>